<organism>
    <name type="scientific">Bacillus subtilis (strain 168)</name>
    <dbReference type="NCBI Taxonomy" id="224308"/>
    <lineage>
        <taxon>Bacteria</taxon>
        <taxon>Bacillati</taxon>
        <taxon>Bacillota</taxon>
        <taxon>Bacilli</taxon>
        <taxon>Bacillales</taxon>
        <taxon>Bacillaceae</taxon>
        <taxon>Bacillus</taxon>
    </lineage>
</organism>
<reference key="1">
    <citation type="journal article" date="1995" name="Microbiology">
        <title>A 10 kb nucleotide sequence at the 5' flanking region (32 degrees) of srfAA of the Bacillus subtilis chromosome.</title>
        <authorList>
            <person name="Fujishima Y."/>
            <person name="Yamane K."/>
        </authorList>
    </citation>
    <scope>NUCLEOTIDE SEQUENCE [GENOMIC DNA]</scope>
    <source>
        <strain>168</strain>
    </source>
</reference>
<reference key="2">
    <citation type="journal article" date="1996" name="Microbiology">
        <title>The 25 degrees-36 degrees region of the Bacillus subtilis chromosome: determination of the sequence of a 146 kb segment and identification of 113 genes.</title>
        <authorList>
            <person name="Yamane K."/>
            <person name="Kumano M."/>
            <person name="Kurita K."/>
        </authorList>
    </citation>
    <scope>NUCLEOTIDE SEQUENCE [GENOMIC DNA]</scope>
    <source>
        <strain>168</strain>
    </source>
</reference>
<reference key="3">
    <citation type="journal article" date="1997" name="Nature">
        <title>The complete genome sequence of the Gram-positive bacterium Bacillus subtilis.</title>
        <authorList>
            <person name="Kunst F."/>
            <person name="Ogasawara N."/>
            <person name="Moszer I."/>
            <person name="Albertini A.M."/>
            <person name="Alloni G."/>
            <person name="Azevedo V."/>
            <person name="Bertero M.G."/>
            <person name="Bessieres P."/>
            <person name="Bolotin A."/>
            <person name="Borchert S."/>
            <person name="Borriss R."/>
            <person name="Boursier L."/>
            <person name="Brans A."/>
            <person name="Braun M."/>
            <person name="Brignell S.C."/>
            <person name="Bron S."/>
            <person name="Brouillet S."/>
            <person name="Bruschi C.V."/>
            <person name="Caldwell B."/>
            <person name="Capuano V."/>
            <person name="Carter N.M."/>
            <person name="Choi S.-K."/>
            <person name="Codani J.-J."/>
            <person name="Connerton I.F."/>
            <person name="Cummings N.J."/>
            <person name="Daniel R.A."/>
            <person name="Denizot F."/>
            <person name="Devine K.M."/>
            <person name="Duesterhoeft A."/>
            <person name="Ehrlich S.D."/>
            <person name="Emmerson P.T."/>
            <person name="Entian K.-D."/>
            <person name="Errington J."/>
            <person name="Fabret C."/>
            <person name="Ferrari E."/>
            <person name="Foulger D."/>
            <person name="Fritz C."/>
            <person name="Fujita M."/>
            <person name="Fujita Y."/>
            <person name="Fuma S."/>
            <person name="Galizzi A."/>
            <person name="Galleron N."/>
            <person name="Ghim S.-Y."/>
            <person name="Glaser P."/>
            <person name="Goffeau A."/>
            <person name="Golightly E.J."/>
            <person name="Grandi G."/>
            <person name="Guiseppi G."/>
            <person name="Guy B.J."/>
            <person name="Haga K."/>
            <person name="Haiech J."/>
            <person name="Harwood C.R."/>
            <person name="Henaut A."/>
            <person name="Hilbert H."/>
            <person name="Holsappel S."/>
            <person name="Hosono S."/>
            <person name="Hullo M.-F."/>
            <person name="Itaya M."/>
            <person name="Jones L.-M."/>
            <person name="Joris B."/>
            <person name="Karamata D."/>
            <person name="Kasahara Y."/>
            <person name="Klaerr-Blanchard M."/>
            <person name="Klein C."/>
            <person name="Kobayashi Y."/>
            <person name="Koetter P."/>
            <person name="Koningstein G."/>
            <person name="Krogh S."/>
            <person name="Kumano M."/>
            <person name="Kurita K."/>
            <person name="Lapidus A."/>
            <person name="Lardinois S."/>
            <person name="Lauber J."/>
            <person name="Lazarevic V."/>
            <person name="Lee S.-M."/>
            <person name="Levine A."/>
            <person name="Liu H."/>
            <person name="Masuda S."/>
            <person name="Mauel C."/>
            <person name="Medigue C."/>
            <person name="Medina N."/>
            <person name="Mellado R.P."/>
            <person name="Mizuno M."/>
            <person name="Moestl D."/>
            <person name="Nakai S."/>
            <person name="Noback M."/>
            <person name="Noone D."/>
            <person name="O'Reilly M."/>
            <person name="Ogawa K."/>
            <person name="Ogiwara A."/>
            <person name="Oudega B."/>
            <person name="Park S.-H."/>
            <person name="Parro V."/>
            <person name="Pohl T.M."/>
            <person name="Portetelle D."/>
            <person name="Porwollik S."/>
            <person name="Prescott A.M."/>
            <person name="Presecan E."/>
            <person name="Pujic P."/>
            <person name="Purnelle B."/>
            <person name="Rapoport G."/>
            <person name="Rey M."/>
            <person name="Reynolds S."/>
            <person name="Rieger M."/>
            <person name="Rivolta C."/>
            <person name="Rocha E."/>
            <person name="Roche B."/>
            <person name="Rose M."/>
            <person name="Sadaie Y."/>
            <person name="Sato T."/>
            <person name="Scanlan E."/>
            <person name="Schleich S."/>
            <person name="Schroeter R."/>
            <person name="Scoffone F."/>
            <person name="Sekiguchi J."/>
            <person name="Sekowska A."/>
            <person name="Seror S.J."/>
            <person name="Serror P."/>
            <person name="Shin B.-S."/>
            <person name="Soldo B."/>
            <person name="Sorokin A."/>
            <person name="Tacconi E."/>
            <person name="Takagi T."/>
            <person name="Takahashi H."/>
            <person name="Takemaru K."/>
            <person name="Takeuchi M."/>
            <person name="Tamakoshi A."/>
            <person name="Tanaka T."/>
            <person name="Terpstra P."/>
            <person name="Tognoni A."/>
            <person name="Tosato V."/>
            <person name="Uchiyama S."/>
            <person name="Vandenbol M."/>
            <person name="Vannier F."/>
            <person name="Vassarotti A."/>
            <person name="Viari A."/>
            <person name="Wambutt R."/>
            <person name="Wedler E."/>
            <person name="Wedler H."/>
            <person name="Weitzenegger T."/>
            <person name="Winters P."/>
            <person name="Wipat A."/>
            <person name="Yamamoto H."/>
            <person name="Yamane K."/>
            <person name="Yasumoto K."/>
            <person name="Yata K."/>
            <person name="Yoshida K."/>
            <person name="Yoshikawa H.-F."/>
            <person name="Zumstein E."/>
            <person name="Yoshikawa H."/>
            <person name="Danchin A."/>
        </authorList>
    </citation>
    <scope>NUCLEOTIDE SEQUENCE [LARGE SCALE GENOMIC DNA]</scope>
    <source>
        <strain>168</strain>
    </source>
</reference>
<reference key="4">
    <citation type="journal article" date="2009" name="Microbiology">
        <title>From a consortium sequence to a unified sequence: the Bacillus subtilis 168 reference genome a decade later.</title>
        <authorList>
            <person name="Barbe V."/>
            <person name="Cruveiller S."/>
            <person name="Kunst F."/>
            <person name="Lenoble P."/>
            <person name="Meurice G."/>
            <person name="Sekowska A."/>
            <person name="Vallenet D."/>
            <person name="Wang T."/>
            <person name="Moszer I."/>
            <person name="Medigue C."/>
            <person name="Danchin A."/>
        </authorList>
    </citation>
    <scope>SEQUENCE REVISION TO 62</scope>
</reference>
<reference key="5">
    <citation type="journal article" date="1991" name="J. Bacteriol.">
        <title>Transcription initiation region of the srfA operon, which is controlled by the comP-comA signal transduction system in Bacillus subtilis.</title>
        <authorList>
            <person name="Nakano M.M."/>
            <person name="Xia L."/>
            <person name="Zuber P."/>
        </authorList>
    </citation>
    <scope>NUCLEOTIDE SEQUENCE [GENOMIC DNA] OF 111-120</scope>
</reference>
<reference key="6">
    <citation type="journal article" date="1999" name="J. Bacteriol.">
        <title>Bacillus subtilis yckG and yckF encode two key enzymes of the ribulose monophosphate pathway used by methylotrophs, and yckH is required for their expression.</title>
        <authorList>
            <person name="Yasueda H."/>
            <person name="Kawahara Y."/>
            <person name="Sugimoto S."/>
        </authorList>
    </citation>
    <scope>CHARACTERIZATION</scope>
    <source>
        <strain>168</strain>
    </source>
</reference>
<proteinExistence type="evidence at protein level"/>
<gene>
    <name type="primary">hxlR</name>
    <name type="ordered locus">BSU03470</name>
</gene>
<evidence type="ECO:0000255" key="1">
    <source>
        <dbReference type="PROSITE-ProRule" id="PRU00435"/>
    </source>
</evidence>
<evidence type="ECO:0000305" key="2"/>
<evidence type="ECO:0007829" key="3">
    <source>
        <dbReference type="PDB" id="7BZD"/>
    </source>
</evidence>
<evidence type="ECO:0007829" key="4">
    <source>
        <dbReference type="PDB" id="7BZE"/>
    </source>
</evidence>
<evidence type="ECO:0007829" key="5">
    <source>
        <dbReference type="PDB" id="7BZG"/>
    </source>
</evidence>
<protein>
    <recommendedName>
        <fullName>HTH-type transcriptional activator HxlR</fullName>
    </recommendedName>
</protein>
<sequence length="120" mass="14104">MSRMDDKRFNCEKELTLAVIGGKWKMLILWHLGKEGTKRFNELKTLIPDITQKILVNQLRELEQDMIVHREVYPVVPPKVEYSLTPHGESLMPILEAMYEWGKGYMELIDIDKNVMKESL</sequence>
<dbReference type="EMBL" id="D30762">
    <property type="protein sequence ID" value="BAA06435.1"/>
    <property type="status" value="ALT_INIT"/>
    <property type="molecule type" value="Genomic_DNA"/>
</dbReference>
<dbReference type="EMBL" id="D50453">
    <property type="protein sequence ID" value="BAA08981.1"/>
    <property type="status" value="ALT_INIT"/>
    <property type="molecule type" value="Genomic_DNA"/>
</dbReference>
<dbReference type="EMBL" id="AL009126">
    <property type="protein sequence ID" value="CAB12141.2"/>
    <property type="molecule type" value="Genomic_DNA"/>
</dbReference>
<dbReference type="EMBL" id="M64702">
    <property type="status" value="NOT_ANNOTATED_CDS"/>
    <property type="molecule type" value="Genomic_DNA"/>
</dbReference>
<dbReference type="PIR" id="B69761">
    <property type="entry name" value="B69761"/>
</dbReference>
<dbReference type="RefSeq" id="NP_388229.2">
    <property type="nucleotide sequence ID" value="NC_000964.3"/>
</dbReference>
<dbReference type="RefSeq" id="WP_003246265.1">
    <property type="nucleotide sequence ID" value="NZ_OZ025638.1"/>
</dbReference>
<dbReference type="PDB" id="7BZD">
    <property type="method" value="X-ray"/>
    <property type="resolution" value="2.61 A"/>
    <property type="chains" value="A=1-120"/>
</dbReference>
<dbReference type="PDB" id="7BZE">
    <property type="method" value="X-ray"/>
    <property type="resolution" value="1.66 A"/>
    <property type="chains" value="A=1-120"/>
</dbReference>
<dbReference type="PDB" id="7BZG">
    <property type="method" value="X-ray"/>
    <property type="resolution" value="2.90 A"/>
    <property type="chains" value="A/B/E/F/I/J=1-120"/>
</dbReference>
<dbReference type="PDBsum" id="7BZD"/>
<dbReference type="PDBsum" id="7BZE"/>
<dbReference type="PDBsum" id="7BZG"/>
<dbReference type="SMR" id="P42406"/>
<dbReference type="FunCoup" id="P42406">
    <property type="interactions" value="112"/>
</dbReference>
<dbReference type="STRING" id="224308.BSU03470"/>
<dbReference type="PaxDb" id="224308-BSU03470"/>
<dbReference type="DNASU" id="938311"/>
<dbReference type="EnsemblBacteria" id="CAB12141">
    <property type="protein sequence ID" value="CAB12141"/>
    <property type="gene ID" value="BSU_03470"/>
</dbReference>
<dbReference type="GeneID" id="938311"/>
<dbReference type="KEGG" id="bsu:BSU03470"/>
<dbReference type="PATRIC" id="fig|224308.179.peg.364"/>
<dbReference type="eggNOG" id="COG1733">
    <property type="taxonomic scope" value="Bacteria"/>
</dbReference>
<dbReference type="InParanoid" id="P42406"/>
<dbReference type="OrthoDB" id="9791143at2"/>
<dbReference type="PhylomeDB" id="P42406"/>
<dbReference type="BioCyc" id="BSUB:BSU03470-MONOMER"/>
<dbReference type="Proteomes" id="UP000001570">
    <property type="component" value="Chromosome"/>
</dbReference>
<dbReference type="GO" id="GO:0003677">
    <property type="term" value="F:DNA binding"/>
    <property type="evidence" value="ECO:0007669"/>
    <property type="project" value="UniProtKB-KW"/>
</dbReference>
<dbReference type="Gene3D" id="1.10.10.10">
    <property type="entry name" value="Winged helix-like DNA-binding domain superfamily/Winged helix DNA-binding domain"/>
    <property type="match status" value="1"/>
</dbReference>
<dbReference type="InterPro" id="IPR002577">
    <property type="entry name" value="HTH_HxlR"/>
</dbReference>
<dbReference type="InterPro" id="IPR036388">
    <property type="entry name" value="WH-like_DNA-bd_sf"/>
</dbReference>
<dbReference type="InterPro" id="IPR036390">
    <property type="entry name" value="WH_DNA-bd_sf"/>
</dbReference>
<dbReference type="PANTHER" id="PTHR33204:SF38">
    <property type="entry name" value="HTH-TYPE TRANSCRIPTIONAL ACTIVATOR HXLR"/>
    <property type="match status" value="1"/>
</dbReference>
<dbReference type="PANTHER" id="PTHR33204">
    <property type="entry name" value="TRANSCRIPTIONAL REGULATOR, MARR FAMILY"/>
    <property type="match status" value="1"/>
</dbReference>
<dbReference type="Pfam" id="PF01638">
    <property type="entry name" value="HxlR"/>
    <property type="match status" value="1"/>
</dbReference>
<dbReference type="SUPFAM" id="SSF46785">
    <property type="entry name" value="Winged helix' DNA-binding domain"/>
    <property type="match status" value="1"/>
</dbReference>
<dbReference type="PROSITE" id="PS51118">
    <property type="entry name" value="HTH_HXLR"/>
    <property type="match status" value="1"/>
</dbReference>
<name>HXLR_BACSU</name>
<feature type="chain" id="PRO_0000148879" description="HTH-type transcriptional activator HxlR">
    <location>
        <begin position="1"/>
        <end position="120"/>
    </location>
</feature>
<feature type="domain" description="HTH hxlR-type" evidence="1">
    <location>
        <begin position="11"/>
        <end position="110"/>
    </location>
</feature>
<feature type="sequence conflict" description="In Ref. 1; BAA06435 and 2; BAA08981." evidence="2" ref="1 2">
    <original>L</original>
    <variation>R</variation>
    <location>
        <position position="62"/>
    </location>
</feature>
<feature type="helix" evidence="5">
    <location>
        <begin position="3"/>
        <end position="5"/>
    </location>
</feature>
<feature type="helix" evidence="4">
    <location>
        <begin position="6"/>
        <end position="20"/>
    </location>
</feature>
<feature type="strand" evidence="4">
    <location>
        <begin position="22"/>
        <end position="24"/>
    </location>
</feature>
<feature type="helix" evidence="4">
    <location>
        <begin position="25"/>
        <end position="35"/>
    </location>
</feature>
<feature type="strand" evidence="3">
    <location>
        <begin position="37"/>
        <end position="39"/>
    </location>
</feature>
<feature type="helix" evidence="4">
    <location>
        <begin position="40"/>
        <end position="46"/>
    </location>
</feature>
<feature type="helix" evidence="4">
    <location>
        <begin position="52"/>
        <end position="64"/>
    </location>
</feature>
<feature type="strand" evidence="4">
    <location>
        <begin position="67"/>
        <end position="73"/>
    </location>
</feature>
<feature type="strand" evidence="4">
    <location>
        <begin position="75"/>
        <end position="77"/>
    </location>
</feature>
<feature type="strand" evidence="4">
    <location>
        <begin position="79"/>
        <end position="84"/>
    </location>
</feature>
<feature type="helix" evidence="4">
    <location>
        <begin position="86"/>
        <end position="89"/>
    </location>
</feature>
<feature type="helix" evidence="4">
    <location>
        <begin position="92"/>
        <end position="111"/>
    </location>
</feature>
<keyword id="KW-0002">3D-structure</keyword>
<keyword id="KW-0010">Activator</keyword>
<keyword id="KW-0238">DNA-binding</keyword>
<keyword id="KW-1185">Reference proteome</keyword>
<keyword id="KW-0804">Transcription</keyword>
<keyword id="KW-0805">Transcription regulation</keyword>
<comment type="function">
    <text>Positive regulator of hxlAB expression.</text>
</comment>
<comment type="sequence caution" evidence="2">
    <conflict type="erroneous initiation">
        <sequence resource="EMBL-CDS" id="BAA06435"/>
    </conflict>
</comment>
<comment type="sequence caution" evidence="2">
    <conflict type="erroneous initiation">
        <sequence resource="EMBL-CDS" id="BAA08981"/>
    </conflict>
</comment>
<accession>P42406</accession>
<accession>O31478</accession>